<reference key="1">
    <citation type="journal article" date="2007" name="PLoS Genet.">
        <title>Meningococcal genetic variation mechanisms viewed through comparative analysis of serogroup C strain FAM18.</title>
        <authorList>
            <person name="Bentley S.D."/>
            <person name="Vernikos G.S."/>
            <person name="Snyder L.A.S."/>
            <person name="Churcher C."/>
            <person name="Arrowsmith C."/>
            <person name="Chillingworth T."/>
            <person name="Cronin A."/>
            <person name="Davis P.H."/>
            <person name="Holroyd N.E."/>
            <person name="Jagels K."/>
            <person name="Maddison M."/>
            <person name="Moule S."/>
            <person name="Rabbinowitsch E."/>
            <person name="Sharp S."/>
            <person name="Unwin L."/>
            <person name="Whitehead S."/>
            <person name="Quail M.A."/>
            <person name="Achtman M."/>
            <person name="Barrell B.G."/>
            <person name="Saunders N.J."/>
            <person name="Parkhill J."/>
        </authorList>
    </citation>
    <scope>NUCLEOTIDE SEQUENCE [LARGE SCALE GENOMIC DNA]</scope>
    <source>
        <strain>ATCC 700532 / DSM 15464 / FAM18</strain>
    </source>
</reference>
<evidence type="ECO:0000255" key="1">
    <source>
        <dbReference type="HAMAP-Rule" id="MF_00595"/>
    </source>
</evidence>
<sequence length="900" mass="101160">MQLHILNNPKDAALAADAEFLKQSLFNLLHEEASPLVVETVKLLSTSDDSAALIEKVLPQLDEQQTHDLTLACGLFAQILNIAEDVHHERRRQIHEEAGRGGAEGSLTETVRRLKAGKADGKSVQRQLDNTSVTAVLTAHPTEVQRQTVLSFNRRIRALLPQRERCTNADALARLRREIDTILLGLWQTSETRRHKLSVNDEINNGVSIFPMSFFEALPKLYRNMEHDFQMVYPDVCVPNILKIGGWIGGDRDGNPFVSAETLRFAFRRHADAVFRFYRGELDKLYRELPLSIRRVKVNDDVMALAALSPDEELARTEEPYRRAIAYIMARAMGKARALGLGMGCKFGFLEPYASAQEFLDDLKKLQRSLIDNGSRLLAEGRLADLIRSVSVFGFHMMPLDLRQHAGKHADVVAELFQHAGLEDYNSLNEEQKQAVLLRELSHQRPLYSPFITYSDHTRHELAIFNEARKIKDEFGEDAVTQSIISNCEQPSDLLALALLLKESGLLAVENGKPHSRINIVPLFETIEALENACPVMETMFRLDWYDALLESRGNIQEIMLGYSDSNKDGGYVTSSWCLYQAELGLVELFKKYDVRMRLFHGRGGSVGRGGGPSYQAILAQPAGSVAGQIRITEQGEVITAKYADPGNAQRNLETLVAATLEASILPDKKDPDAKLMQALSDVSFKYYRELITHPDFIDYFLQTSPIQEIATLNLGSRPASRKTLARIQDLRAIPWVFSWMQNRLMLPAWYGFGSAVETLCEGNPDTLTALREHAQSNPFFQAMLSNMEQVMAKTDITLAENYAGLSESPDKAKIIFGMIKEEYRRSRKALLDLLQTEELLRDNRSLARSLALRIPYLNALNGLQVAMLKRLRKEPDNPHALLMVHLTINGVAQGLRNTG</sequence>
<gene>
    <name evidence="1" type="primary">ppc</name>
    <name type="ordered locus">NMC2042</name>
</gene>
<keyword id="KW-0120">Carbon dioxide fixation</keyword>
<keyword id="KW-0456">Lyase</keyword>
<keyword id="KW-0460">Magnesium</keyword>
<accession>A1KWE0</accession>
<feature type="chain" id="PRO_1000025568" description="Phosphoenolpyruvate carboxylase">
    <location>
        <begin position="1"/>
        <end position="900"/>
    </location>
</feature>
<feature type="active site" evidence="1">
    <location>
        <position position="140"/>
    </location>
</feature>
<feature type="active site" evidence="1">
    <location>
        <position position="568"/>
    </location>
</feature>
<protein>
    <recommendedName>
        <fullName evidence="1">Phosphoenolpyruvate carboxylase</fullName>
        <shortName evidence="1">PEPC</shortName>
        <shortName evidence="1">PEPCase</shortName>
        <ecNumber evidence="1">4.1.1.31</ecNumber>
    </recommendedName>
</protein>
<organism>
    <name type="scientific">Neisseria meningitidis serogroup C / serotype 2a (strain ATCC 700532 / DSM 15464 / FAM18)</name>
    <dbReference type="NCBI Taxonomy" id="272831"/>
    <lineage>
        <taxon>Bacteria</taxon>
        <taxon>Pseudomonadati</taxon>
        <taxon>Pseudomonadota</taxon>
        <taxon>Betaproteobacteria</taxon>
        <taxon>Neisseriales</taxon>
        <taxon>Neisseriaceae</taxon>
        <taxon>Neisseria</taxon>
    </lineage>
</organism>
<comment type="function">
    <text evidence="1">Forms oxaloacetate, a four-carbon dicarboxylic acid source for the tricarboxylic acid cycle.</text>
</comment>
<comment type="catalytic activity">
    <reaction evidence="1">
        <text>oxaloacetate + phosphate = phosphoenolpyruvate + hydrogencarbonate</text>
        <dbReference type="Rhea" id="RHEA:28370"/>
        <dbReference type="ChEBI" id="CHEBI:16452"/>
        <dbReference type="ChEBI" id="CHEBI:17544"/>
        <dbReference type="ChEBI" id="CHEBI:43474"/>
        <dbReference type="ChEBI" id="CHEBI:58702"/>
        <dbReference type="EC" id="4.1.1.31"/>
    </reaction>
</comment>
<comment type="cofactor">
    <cofactor evidence="1">
        <name>Mg(2+)</name>
        <dbReference type="ChEBI" id="CHEBI:18420"/>
    </cofactor>
</comment>
<comment type="similarity">
    <text evidence="1">Belongs to the PEPCase type 1 family.</text>
</comment>
<proteinExistence type="inferred from homology"/>
<name>CAPP_NEIMF</name>
<dbReference type="EC" id="4.1.1.31" evidence="1"/>
<dbReference type="EMBL" id="AM421808">
    <property type="protein sequence ID" value="CAM11197.1"/>
    <property type="molecule type" value="Genomic_DNA"/>
</dbReference>
<dbReference type="SMR" id="A1KWE0"/>
<dbReference type="KEGG" id="nmc:NMC2042"/>
<dbReference type="HOGENOM" id="CLU_006557_2_0_4"/>
<dbReference type="Proteomes" id="UP000002286">
    <property type="component" value="Chromosome"/>
</dbReference>
<dbReference type="GO" id="GO:0005829">
    <property type="term" value="C:cytosol"/>
    <property type="evidence" value="ECO:0007669"/>
    <property type="project" value="TreeGrafter"/>
</dbReference>
<dbReference type="GO" id="GO:0000287">
    <property type="term" value="F:magnesium ion binding"/>
    <property type="evidence" value="ECO:0007669"/>
    <property type="project" value="UniProtKB-UniRule"/>
</dbReference>
<dbReference type="GO" id="GO:0008964">
    <property type="term" value="F:phosphoenolpyruvate carboxylase activity"/>
    <property type="evidence" value="ECO:0007669"/>
    <property type="project" value="UniProtKB-UniRule"/>
</dbReference>
<dbReference type="GO" id="GO:0015977">
    <property type="term" value="P:carbon fixation"/>
    <property type="evidence" value="ECO:0007669"/>
    <property type="project" value="UniProtKB-UniRule"/>
</dbReference>
<dbReference type="GO" id="GO:0006107">
    <property type="term" value="P:oxaloacetate metabolic process"/>
    <property type="evidence" value="ECO:0007669"/>
    <property type="project" value="UniProtKB-UniRule"/>
</dbReference>
<dbReference type="GO" id="GO:0006099">
    <property type="term" value="P:tricarboxylic acid cycle"/>
    <property type="evidence" value="ECO:0007669"/>
    <property type="project" value="InterPro"/>
</dbReference>
<dbReference type="Gene3D" id="1.20.1440.90">
    <property type="entry name" value="Phosphoenolpyruvate/pyruvate domain"/>
    <property type="match status" value="1"/>
</dbReference>
<dbReference type="HAMAP" id="MF_00595">
    <property type="entry name" value="PEPcase_type1"/>
    <property type="match status" value="1"/>
</dbReference>
<dbReference type="InterPro" id="IPR021135">
    <property type="entry name" value="PEP_COase"/>
</dbReference>
<dbReference type="InterPro" id="IPR022805">
    <property type="entry name" value="PEP_COase_bac/pln-type"/>
</dbReference>
<dbReference type="InterPro" id="IPR018129">
    <property type="entry name" value="PEP_COase_Lys_AS"/>
</dbReference>
<dbReference type="InterPro" id="IPR033129">
    <property type="entry name" value="PEPCASE_His_AS"/>
</dbReference>
<dbReference type="InterPro" id="IPR015813">
    <property type="entry name" value="Pyrv/PenolPyrv_kinase-like_dom"/>
</dbReference>
<dbReference type="NCBIfam" id="NF000584">
    <property type="entry name" value="PRK00009.1"/>
    <property type="match status" value="1"/>
</dbReference>
<dbReference type="PANTHER" id="PTHR30523">
    <property type="entry name" value="PHOSPHOENOLPYRUVATE CARBOXYLASE"/>
    <property type="match status" value="1"/>
</dbReference>
<dbReference type="PANTHER" id="PTHR30523:SF6">
    <property type="entry name" value="PHOSPHOENOLPYRUVATE CARBOXYLASE"/>
    <property type="match status" value="1"/>
</dbReference>
<dbReference type="Pfam" id="PF00311">
    <property type="entry name" value="PEPcase"/>
    <property type="match status" value="1"/>
</dbReference>
<dbReference type="PRINTS" id="PR00150">
    <property type="entry name" value="PEPCARBXLASE"/>
</dbReference>
<dbReference type="SUPFAM" id="SSF51621">
    <property type="entry name" value="Phosphoenolpyruvate/pyruvate domain"/>
    <property type="match status" value="1"/>
</dbReference>
<dbReference type="PROSITE" id="PS00781">
    <property type="entry name" value="PEPCASE_1"/>
    <property type="match status" value="1"/>
</dbReference>
<dbReference type="PROSITE" id="PS00393">
    <property type="entry name" value="PEPCASE_2"/>
    <property type="match status" value="1"/>
</dbReference>